<name>METE_BAUCH</name>
<reference key="1">
    <citation type="journal article" date="2006" name="PLoS Biol.">
        <title>Metabolic complementarity and genomics of the dual bacterial symbiosis of sharpshooters.</title>
        <authorList>
            <person name="Wu D."/>
            <person name="Daugherty S.C."/>
            <person name="Van Aken S.E."/>
            <person name="Pai G.H."/>
            <person name="Watkins K.L."/>
            <person name="Khouri H."/>
            <person name="Tallon L.J."/>
            <person name="Zaborsky J.M."/>
            <person name="Dunbar H.E."/>
            <person name="Tran P.L."/>
            <person name="Moran N.A."/>
            <person name="Eisen J.A."/>
        </authorList>
    </citation>
    <scope>NUCLEOTIDE SEQUENCE [LARGE SCALE GENOMIC DNA]</scope>
</reference>
<accession>Q1LU68</accession>
<evidence type="ECO:0000255" key="1">
    <source>
        <dbReference type="HAMAP-Rule" id="MF_00172"/>
    </source>
</evidence>
<gene>
    <name evidence="1" type="primary">metE</name>
    <name type="ordered locus">BCI_0017</name>
</gene>
<comment type="function">
    <text evidence="1">Catalyzes the transfer of a methyl group from 5-methyltetrahydrofolate to homocysteine resulting in methionine formation.</text>
</comment>
<comment type="catalytic activity">
    <reaction evidence="1">
        <text>5-methyltetrahydropteroyltri-L-glutamate + L-homocysteine = tetrahydropteroyltri-L-glutamate + L-methionine</text>
        <dbReference type="Rhea" id="RHEA:21196"/>
        <dbReference type="ChEBI" id="CHEBI:57844"/>
        <dbReference type="ChEBI" id="CHEBI:58140"/>
        <dbReference type="ChEBI" id="CHEBI:58199"/>
        <dbReference type="ChEBI" id="CHEBI:58207"/>
        <dbReference type="EC" id="2.1.1.14"/>
    </reaction>
</comment>
<comment type="cofactor">
    <cofactor evidence="1">
        <name>Zn(2+)</name>
        <dbReference type="ChEBI" id="CHEBI:29105"/>
    </cofactor>
    <text evidence="1">Binds 1 zinc ion per subunit.</text>
</comment>
<comment type="pathway">
    <text evidence="1">Amino-acid biosynthesis; L-methionine biosynthesis via de novo pathway; L-methionine from L-homocysteine (MetE route): step 1/1.</text>
</comment>
<comment type="similarity">
    <text evidence="1">Belongs to the vitamin-B12 independent methionine synthase family.</text>
</comment>
<organism>
    <name type="scientific">Baumannia cicadellinicola subsp. Homalodisca coagulata</name>
    <dbReference type="NCBI Taxonomy" id="374463"/>
    <lineage>
        <taxon>Bacteria</taxon>
        <taxon>Pseudomonadati</taxon>
        <taxon>Pseudomonadota</taxon>
        <taxon>Gammaproteobacteria</taxon>
        <taxon>Candidatus Palibaumannia</taxon>
    </lineage>
</organism>
<protein>
    <recommendedName>
        <fullName evidence="1">5-methyltetrahydropteroyltriglutamate--homocysteine methyltransferase</fullName>
        <ecNumber evidence="1">2.1.1.14</ecNumber>
    </recommendedName>
    <alternativeName>
        <fullName evidence="1">Cobalamin-independent methionine synthase</fullName>
    </alternativeName>
    <alternativeName>
        <fullName evidence="1">Methionine synthase, vitamin-B12 independent isozyme</fullName>
    </alternativeName>
</protein>
<keyword id="KW-0028">Amino-acid biosynthesis</keyword>
<keyword id="KW-0479">Metal-binding</keyword>
<keyword id="KW-0486">Methionine biosynthesis</keyword>
<keyword id="KW-0489">Methyltransferase</keyword>
<keyword id="KW-1185">Reference proteome</keyword>
<keyword id="KW-0677">Repeat</keyword>
<keyword id="KW-0808">Transferase</keyword>
<keyword id="KW-0862">Zinc</keyword>
<feature type="chain" id="PRO_1000017224" description="5-methyltetrahydropteroyltriglutamate--homocysteine methyltransferase">
    <location>
        <begin position="1"/>
        <end position="764"/>
    </location>
</feature>
<feature type="active site" description="Proton donor" evidence="1">
    <location>
        <position position="699"/>
    </location>
</feature>
<feature type="binding site" evidence="1">
    <location>
        <begin position="17"/>
        <end position="20"/>
    </location>
    <ligand>
        <name>5-methyltetrahydropteroyltri-L-glutamate</name>
        <dbReference type="ChEBI" id="CHEBI:58207"/>
    </ligand>
</feature>
<feature type="binding site" evidence="1">
    <location>
        <position position="117"/>
    </location>
    <ligand>
        <name>5-methyltetrahydropteroyltri-L-glutamate</name>
        <dbReference type="ChEBI" id="CHEBI:58207"/>
    </ligand>
</feature>
<feature type="binding site" evidence="1">
    <location>
        <begin position="436"/>
        <end position="438"/>
    </location>
    <ligand>
        <name>L-homocysteine</name>
        <dbReference type="ChEBI" id="CHEBI:58199"/>
    </ligand>
</feature>
<feature type="binding site" evidence="1">
    <location>
        <begin position="436"/>
        <end position="438"/>
    </location>
    <ligand>
        <name>L-methionine</name>
        <dbReference type="ChEBI" id="CHEBI:57844"/>
    </ligand>
</feature>
<feature type="binding site" evidence="1">
    <location>
        <position position="489"/>
    </location>
    <ligand>
        <name>L-homocysteine</name>
        <dbReference type="ChEBI" id="CHEBI:58199"/>
    </ligand>
</feature>
<feature type="binding site" evidence="1">
    <location>
        <position position="489"/>
    </location>
    <ligand>
        <name>L-methionine</name>
        <dbReference type="ChEBI" id="CHEBI:57844"/>
    </ligand>
</feature>
<feature type="binding site" evidence="1">
    <location>
        <begin position="520"/>
        <end position="521"/>
    </location>
    <ligand>
        <name>5-methyltetrahydropteroyltri-L-glutamate</name>
        <dbReference type="ChEBI" id="CHEBI:58207"/>
    </ligand>
</feature>
<feature type="binding site" evidence="1">
    <location>
        <position position="566"/>
    </location>
    <ligand>
        <name>5-methyltetrahydropteroyltri-L-glutamate</name>
        <dbReference type="ChEBI" id="CHEBI:58207"/>
    </ligand>
</feature>
<feature type="binding site" evidence="1">
    <location>
        <position position="604"/>
    </location>
    <ligand>
        <name>L-homocysteine</name>
        <dbReference type="ChEBI" id="CHEBI:58199"/>
    </ligand>
</feature>
<feature type="binding site" evidence="1">
    <location>
        <position position="604"/>
    </location>
    <ligand>
        <name>L-methionine</name>
        <dbReference type="ChEBI" id="CHEBI:57844"/>
    </ligand>
</feature>
<feature type="binding site" evidence="1">
    <location>
        <position position="610"/>
    </location>
    <ligand>
        <name>5-methyltetrahydropteroyltri-L-glutamate</name>
        <dbReference type="ChEBI" id="CHEBI:58207"/>
    </ligand>
</feature>
<feature type="binding site" evidence="1">
    <location>
        <position position="646"/>
    </location>
    <ligand>
        <name>Zn(2+)</name>
        <dbReference type="ChEBI" id="CHEBI:29105"/>
        <note>catalytic</note>
    </ligand>
</feature>
<feature type="binding site" evidence="1">
    <location>
        <position position="648"/>
    </location>
    <ligand>
        <name>Zn(2+)</name>
        <dbReference type="ChEBI" id="CHEBI:29105"/>
        <note>catalytic</note>
    </ligand>
</feature>
<feature type="binding site" evidence="1">
    <location>
        <position position="670"/>
    </location>
    <ligand>
        <name>Zn(2+)</name>
        <dbReference type="ChEBI" id="CHEBI:29105"/>
        <note>catalytic</note>
    </ligand>
</feature>
<feature type="binding site" evidence="1">
    <location>
        <position position="731"/>
    </location>
    <ligand>
        <name>Zn(2+)</name>
        <dbReference type="ChEBI" id="CHEBI:29105"/>
        <note>catalytic</note>
    </ligand>
</feature>
<dbReference type="EC" id="2.1.1.14" evidence="1"/>
<dbReference type="EMBL" id="CP000238">
    <property type="protein sequence ID" value="ABF14113.1"/>
    <property type="molecule type" value="Genomic_DNA"/>
</dbReference>
<dbReference type="RefSeq" id="WP_011520229.1">
    <property type="nucleotide sequence ID" value="NC_007984.1"/>
</dbReference>
<dbReference type="SMR" id="Q1LU68"/>
<dbReference type="STRING" id="374463.BCI_0017"/>
<dbReference type="KEGG" id="bci:BCI_0017"/>
<dbReference type="HOGENOM" id="CLU_013175_0_0_6"/>
<dbReference type="OrthoDB" id="244285at2"/>
<dbReference type="UniPathway" id="UPA00051">
    <property type="reaction ID" value="UER00082"/>
</dbReference>
<dbReference type="Proteomes" id="UP000002427">
    <property type="component" value="Chromosome"/>
</dbReference>
<dbReference type="GO" id="GO:0003871">
    <property type="term" value="F:5-methyltetrahydropteroyltriglutamate-homocysteine S-methyltransferase activity"/>
    <property type="evidence" value="ECO:0007669"/>
    <property type="project" value="UniProtKB-UniRule"/>
</dbReference>
<dbReference type="GO" id="GO:0008270">
    <property type="term" value="F:zinc ion binding"/>
    <property type="evidence" value="ECO:0007669"/>
    <property type="project" value="InterPro"/>
</dbReference>
<dbReference type="GO" id="GO:0009086">
    <property type="term" value="P:methionine biosynthetic process"/>
    <property type="evidence" value="ECO:0007669"/>
    <property type="project" value="UniProtKB-UniRule"/>
</dbReference>
<dbReference type="GO" id="GO:0032259">
    <property type="term" value="P:methylation"/>
    <property type="evidence" value="ECO:0007669"/>
    <property type="project" value="UniProtKB-KW"/>
</dbReference>
<dbReference type="CDD" id="cd03311">
    <property type="entry name" value="CIMS_C_terminal_like"/>
    <property type="match status" value="1"/>
</dbReference>
<dbReference type="CDD" id="cd03312">
    <property type="entry name" value="CIMS_N_terminal_like"/>
    <property type="match status" value="1"/>
</dbReference>
<dbReference type="FunFam" id="3.20.20.210:FF:000002">
    <property type="entry name" value="5-methyltetrahydropteroyltriglutamate--homocysteine methyltransferase"/>
    <property type="match status" value="1"/>
</dbReference>
<dbReference type="FunFam" id="3.20.20.210:FF:000003">
    <property type="entry name" value="5-methyltetrahydropteroyltriglutamate--homocysteine methyltransferase"/>
    <property type="match status" value="1"/>
</dbReference>
<dbReference type="Gene3D" id="3.20.20.210">
    <property type="match status" value="2"/>
</dbReference>
<dbReference type="HAMAP" id="MF_00172">
    <property type="entry name" value="Meth_synth"/>
    <property type="match status" value="1"/>
</dbReference>
<dbReference type="InterPro" id="IPR013215">
    <property type="entry name" value="Cbl-indep_Met_Synth_N"/>
</dbReference>
<dbReference type="InterPro" id="IPR006276">
    <property type="entry name" value="Cobalamin-indep_Met_synthase"/>
</dbReference>
<dbReference type="InterPro" id="IPR002629">
    <property type="entry name" value="Met_Synth_C/arc"/>
</dbReference>
<dbReference type="InterPro" id="IPR038071">
    <property type="entry name" value="UROD/MetE-like_sf"/>
</dbReference>
<dbReference type="NCBIfam" id="TIGR01371">
    <property type="entry name" value="met_syn_B12ind"/>
    <property type="match status" value="1"/>
</dbReference>
<dbReference type="NCBIfam" id="NF003556">
    <property type="entry name" value="PRK05222.1"/>
    <property type="match status" value="1"/>
</dbReference>
<dbReference type="PANTHER" id="PTHR30519">
    <property type="entry name" value="5-METHYLTETRAHYDROPTEROYLTRIGLUTAMATE--HOMOCYSTEINE METHYLTRANSFERASE"/>
    <property type="match status" value="1"/>
</dbReference>
<dbReference type="Pfam" id="PF08267">
    <property type="entry name" value="Meth_synt_1"/>
    <property type="match status" value="1"/>
</dbReference>
<dbReference type="Pfam" id="PF01717">
    <property type="entry name" value="Meth_synt_2"/>
    <property type="match status" value="1"/>
</dbReference>
<dbReference type="PIRSF" id="PIRSF000382">
    <property type="entry name" value="MeTrfase_B12_ind"/>
    <property type="match status" value="1"/>
</dbReference>
<dbReference type="SUPFAM" id="SSF51726">
    <property type="entry name" value="UROD/MetE-like"/>
    <property type="match status" value="2"/>
</dbReference>
<sequence>MTILSHILGFPRIGLHRELKRAQESYWDGHITQQQLLNTGRELRACHWQQQKQAGLNMLPVGDFAWYDHVLTTSLMLDNVPVRHRNDDGSSNIDTLYRIGRGNAPTGQPVVASEMTKWFNTNYHYIVPEFTVGQQFRLGWTQLIEEVDEALALGYNIKPILLGPISYLWLGKAKEKHFDRLSLLSALLPVYQQILALLAQRGIEWVQIDEPALVLELPTAWCNAYYDAYTDALQGYSKLLLTTYFDSIGHHLNIITNLSVHGLHVDLIAGNDDVEVLHRTLPSNWVLSAGVINGRNVWRADLPSKFKQLRSLVGQRELWVGSSCSLLHSPIDLSIETRMDPEVKSWFAFTIQKCNELKLLCNALNRLDDTKYQAILADYSAPLWARQTSEKVHNRQVKIRTEQITENHSQRQQHYLDRINVQRARFNLPILPTTTIGSFPQTTAIRSLRLDLKSGRIDNEYYKNAICNHIKQAITEQDALGLDVLVHGEAERNDMVEYFGEHLNGFIFTQNGWVQSYGSRCVKPPIIIGDISRPKPITVEWAWYAQSLTQKPVKGMLTGPVTILCWSFPREDLDRKTIARQIALALRDEVIDLENAGIGIIQIDEPALREGLPLKYSAWKEYLTWAVEAFRLNAAVAKNNTQIHTHMCYSEFNDIMDSIIAMDADVITIETSRSNMKLLDTFKQYQYPNDIGPGVYDIHSPNIPSEDDIIQLLRKAAQVIPIKRLWVNPDCGLKTRTWLETRKALSNMVNAAHKLRREEEYNRS</sequence>
<proteinExistence type="inferred from homology"/>